<feature type="chain" id="PRO_0000431431" description="Origin of replication complex subunit 3">
    <location>
        <begin position="1"/>
        <end position="734"/>
    </location>
</feature>
<feature type="region of interest" description="Disordered" evidence="2">
    <location>
        <begin position="1"/>
        <end position="25"/>
    </location>
</feature>
<feature type="region of interest" description="Disordered" evidence="2">
    <location>
        <begin position="532"/>
        <end position="554"/>
    </location>
</feature>
<feature type="compositionally biased region" description="Polar residues" evidence="2">
    <location>
        <begin position="12"/>
        <end position="24"/>
    </location>
</feature>
<comment type="function">
    <text evidence="1">Component of the origin recognition complex (ORC) that binds origins of replication. DNA-binding is ATP-dependent. The specific DNA sequences that define origins of replication have not been identified yet.</text>
</comment>
<comment type="subunit">
    <text evidence="3 5">Component of the origin recognition complex (ORC) composed of at least ORC1 (ORC1A or ORC1B), ORC2, ORC3, ORC4, ORC5 and ORC6. ORC is regulated in a cell-cycle and development dependent manner. It is sequentially assembled at the exit from anaphase of mitosis and disassembled as cells enter S phase. Interacts directly with ORC1A, ORC2, ORC4, ORC5 and ORC6.</text>
</comment>
<comment type="subcellular location">
    <subcellularLocation>
        <location evidence="1">Nucleus</location>
    </subcellularLocation>
</comment>
<comment type="tissue specificity">
    <text evidence="3 5">Follow a cell-cycle regulation with a peak at the G1/S-phase (PubMed:16179646). Mostly expressed in siliques and flowers, and, to a lower exent, in flower buds, leaves, roots and stems (PubMed:15358564, PubMed:16179646).</text>
</comment>
<comment type="induction">
    <text evidence="3 4 5">Regulated by E2F (PubMed:16126853, PubMed:16179646). Accumulates rapidly after cell cycle reactivation by sucrose addition following cell cycle arrest mediated by sucrose deprivation (PubMed:15358564, PubMed:16179646).</text>
</comment>
<comment type="similarity">
    <text evidence="7">Belongs to the ORC3 family.</text>
</comment>
<comment type="sequence caution" evidence="7">
    <conflict type="erroneous gene model prediction">
        <sequence resource="EMBL-CDS" id="CAC01833"/>
    </conflict>
</comment>
<name>ORC3_ARATH</name>
<gene>
    <name evidence="6" type="primary">ORC3</name>
    <name evidence="8" type="ordered locus">At5g16690</name>
    <name evidence="10" type="ORF">F5E19.30</name>
</gene>
<organism evidence="9">
    <name type="scientific">Arabidopsis thaliana</name>
    <name type="common">Mouse-ear cress</name>
    <dbReference type="NCBI Taxonomy" id="3702"/>
    <lineage>
        <taxon>Eukaryota</taxon>
        <taxon>Viridiplantae</taxon>
        <taxon>Streptophyta</taxon>
        <taxon>Embryophyta</taxon>
        <taxon>Tracheophyta</taxon>
        <taxon>Spermatophyta</taxon>
        <taxon>Magnoliopsida</taxon>
        <taxon>eudicotyledons</taxon>
        <taxon>Gunneridae</taxon>
        <taxon>Pentapetalae</taxon>
        <taxon>rosids</taxon>
        <taxon>malvids</taxon>
        <taxon>Brassicales</taxon>
        <taxon>Brassicaceae</taxon>
        <taxon>Camelineae</taxon>
        <taxon>Arabidopsis</taxon>
    </lineage>
</organism>
<protein>
    <recommendedName>
        <fullName evidence="6">Origin of replication complex subunit 3</fullName>
        <shortName evidence="6">AtORC3</shortName>
    </recommendedName>
</protein>
<evidence type="ECO:0000250" key="1">
    <source>
        <dbReference type="UniProtKB" id="Q9UBD5"/>
    </source>
</evidence>
<evidence type="ECO:0000256" key="2">
    <source>
        <dbReference type="SAM" id="MobiDB-lite"/>
    </source>
</evidence>
<evidence type="ECO:0000269" key="3">
    <source>
    </source>
</evidence>
<evidence type="ECO:0000269" key="4">
    <source>
    </source>
</evidence>
<evidence type="ECO:0000269" key="5">
    <source>
    </source>
</evidence>
<evidence type="ECO:0000303" key="6">
    <source>
    </source>
</evidence>
<evidence type="ECO:0000305" key="7"/>
<evidence type="ECO:0000312" key="8">
    <source>
        <dbReference type="Araport" id="AT5G16690"/>
    </source>
</evidence>
<evidence type="ECO:0000312" key="9">
    <source>
        <dbReference type="EMBL" id="AAT37463.1"/>
    </source>
</evidence>
<evidence type="ECO:0000312" key="10">
    <source>
        <dbReference type="EMBL" id="CAC01833.1"/>
    </source>
</evidence>
<keyword id="KW-0235">DNA replication</keyword>
<keyword id="KW-0238">DNA-binding</keyword>
<keyword id="KW-0539">Nucleus</keyword>
<keyword id="KW-1185">Reference proteome</keyword>
<dbReference type="EMBL" id="AY524002">
    <property type="protein sequence ID" value="AAT37463.1"/>
    <property type="molecule type" value="mRNA"/>
</dbReference>
<dbReference type="EMBL" id="AL391147">
    <property type="protein sequence ID" value="CAC01833.1"/>
    <property type="status" value="ALT_SEQ"/>
    <property type="molecule type" value="Genomic_DNA"/>
</dbReference>
<dbReference type="EMBL" id="CP002688">
    <property type="protein sequence ID" value="AED92326.1"/>
    <property type="molecule type" value="Genomic_DNA"/>
</dbReference>
<dbReference type="PIR" id="T51501">
    <property type="entry name" value="T51501"/>
</dbReference>
<dbReference type="RefSeq" id="NP_197171.2">
    <property type="nucleotide sequence ID" value="NM_121674.4"/>
</dbReference>
<dbReference type="SMR" id="Q6E7H0"/>
<dbReference type="FunCoup" id="Q6E7H0">
    <property type="interactions" value="3070"/>
</dbReference>
<dbReference type="IntAct" id="Q6E7H0">
    <property type="interactions" value="7"/>
</dbReference>
<dbReference type="MINT" id="Q6E7H0"/>
<dbReference type="STRING" id="3702.Q6E7H0"/>
<dbReference type="iPTMnet" id="Q6E7H0"/>
<dbReference type="PaxDb" id="3702-AT5G16690.1"/>
<dbReference type="ProteomicsDB" id="248641"/>
<dbReference type="EnsemblPlants" id="AT5G16690.1">
    <property type="protein sequence ID" value="AT5G16690.1"/>
    <property type="gene ID" value="AT5G16690"/>
</dbReference>
<dbReference type="GeneID" id="831530"/>
<dbReference type="Gramene" id="AT5G16690.1">
    <property type="protein sequence ID" value="AT5G16690.1"/>
    <property type="gene ID" value="AT5G16690"/>
</dbReference>
<dbReference type="KEGG" id="ath:AT5G16690"/>
<dbReference type="Araport" id="AT5G16690"/>
<dbReference type="TAIR" id="AT5G16690">
    <property type="gene designation" value="ORC3"/>
</dbReference>
<dbReference type="eggNOG" id="KOG2538">
    <property type="taxonomic scope" value="Eukaryota"/>
</dbReference>
<dbReference type="HOGENOM" id="CLU_010669_0_0_1"/>
<dbReference type="InParanoid" id="Q6E7H0"/>
<dbReference type="OMA" id="YCLMEHY"/>
<dbReference type="OrthoDB" id="10265211at2759"/>
<dbReference type="PhylomeDB" id="Q6E7H0"/>
<dbReference type="PRO" id="PR:Q6E7H0"/>
<dbReference type="Proteomes" id="UP000006548">
    <property type="component" value="Chromosome 5"/>
</dbReference>
<dbReference type="ExpressionAtlas" id="Q6E7H0">
    <property type="expression patterns" value="baseline and differential"/>
</dbReference>
<dbReference type="GO" id="GO:0005664">
    <property type="term" value="C:nuclear origin of replication recognition complex"/>
    <property type="evidence" value="ECO:0007669"/>
    <property type="project" value="InterPro"/>
</dbReference>
<dbReference type="GO" id="GO:0000808">
    <property type="term" value="C:origin recognition complex"/>
    <property type="evidence" value="ECO:0000250"/>
    <property type="project" value="TAIR"/>
</dbReference>
<dbReference type="GO" id="GO:0003677">
    <property type="term" value="F:DNA binding"/>
    <property type="evidence" value="ECO:0007669"/>
    <property type="project" value="UniProtKB-KW"/>
</dbReference>
<dbReference type="GO" id="GO:0006260">
    <property type="term" value="P:DNA replication"/>
    <property type="evidence" value="ECO:0000250"/>
    <property type="project" value="TAIR"/>
</dbReference>
<dbReference type="GO" id="GO:0048527">
    <property type="term" value="P:lateral root development"/>
    <property type="evidence" value="ECO:0007669"/>
    <property type="project" value="EnsemblPlants"/>
</dbReference>
<dbReference type="GO" id="GO:0009744">
    <property type="term" value="P:response to sucrose"/>
    <property type="evidence" value="ECO:0007669"/>
    <property type="project" value="EnsemblPlants"/>
</dbReference>
<dbReference type="CDD" id="cd20704">
    <property type="entry name" value="Orc3"/>
    <property type="match status" value="1"/>
</dbReference>
<dbReference type="InterPro" id="IPR020795">
    <property type="entry name" value="ORC3"/>
</dbReference>
<dbReference type="InterPro" id="IPR045667">
    <property type="entry name" value="ORC3_N"/>
</dbReference>
<dbReference type="InterPro" id="IPR040855">
    <property type="entry name" value="ORC_WH_C"/>
</dbReference>
<dbReference type="PANTHER" id="PTHR12748">
    <property type="entry name" value="ORIGIN RECOGNITION COMPLEX SUBUNIT 3"/>
    <property type="match status" value="1"/>
</dbReference>
<dbReference type="PANTHER" id="PTHR12748:SF0">
    <property type="entry name" value="ORIGIN RECOGNITION COMPLEX SUBUNIT 3"/>
    <property type="match status" value="1"/>
</dbReference>
<dbReference type="Pfam" id="PF07034">
    <property type="entry name" value="ORC3_N"/>
    <property type="match status" value="1"/>
</dbReference>
<dbReference type="Pfam" id="PF18137">
    <property type="entry name" value="ORC_WH_C"/>
    <property type="match status" value="1"/>
</dbReference>
<proteinExistence type="evidence at protein level"/>
<reference key="1">
    <citation type="journal article" date="2004" name="FEBS Lett.">
        <title>Genome based identification and analysis of the pre-replicative complex of Arabidopsis thaliana.</title>
        <authorList>
            <person name="Masuda H.P."/>
            <person name="Ramos G.B.A."/>
            <person name="de Almeida-Engler J."/>
            <person name="Cabral L.M."/>
            <person name="Coqueiro V.M."/>
            <person name="Macrini C.M.T."/>
            <person name="Ferreira P.C.G."/>
            <person name="Hemerly A.S."/>
        </authorList>
    </citation>
    <scope>NUCLEOTIDE SEQUENCE [MRNA]</scope>
    <scope>SUBUNIT</scope>
    <scope>INTERACTION WITH ORC3; ORC4; ORC5 AND ORC6</scope>
    <scope>TISSUE SPECIFICITY</scope>
    <scope>INDUCTION BY SUCROSE</scope>
    <scope>GENE FAMILY</scope>
</reference>
<reference key="2">
    <citation type="journal article" date="2000" name="Nature">
        <title>Sequence and analysis of chromosome 5 of the plant Arabidopsis thaliana.</title>
        <authorList>
            <person name="Tabata S."/>
            <person name="Kaneko T."/>
            <person name="Nakamura Y."/>
            <person name="Kotani H."/>
            <person name="Kato T."/>
            <person name="Asamizu E."/>
            <person name="Miyajima N."/>
            <person name="Sasamoto S."/>
            <person name="Kimura T."/>
            <person name="Hosouchi T."/>
            <person name="Kawashima K."/>
            <person name="Kohara M."/>
            <person name="Matsumoto M."/>
            <person name="Matsuno A."/>
            <person name="Muraki A."/>
            <person name="Nakayama S."/>
            <person name="Nakazaki N."/>
            <person name="Naruo K."/>
            <person name="Okumura S."/>
            <person name="Shinpo S."/>
            <person name="Takeuchi C."/>
            <person name="Wada T."/>
            <person name="Watanabe A."/>
            <person name="Yamada M."/>
            <person name="Yasuda M."/>
            <person name="Sato S."/>
            <person name="de la Bastide M."/>
            <person name="Huang E."/>
            <person name="Spiegel L."/>
            <person name="Gnoj L."/>
            <person name="O'Shaughnessy A."/>
            <person name="Preston R."/>
            <person name="Habermann K."/>
            <person name="Murray J."/>
            <person name="Johnson D."/>
            <person name="Rohlfing T."/>
            <person name="Nelson J."/>
            <person name="Stoneking T."/>
            <person name="Pepin K."/>
            <person name="Spieth J."/>
            <person name="Sekhon M."/>
            <person name="Armstrong J."/>
            <person name="Becker M."/>
            <person name="Belter E."/>
            <person name="Cordum H."/>
            <person name="Cordes M."/>
            <person name="Courtney L."/>
            <person name="Courtney W."/>
            <person name="Dante M."/>
            <person name="Du H."/>
            <person name="Edwards J."/>
            <person name="Fryman J."/>
            <person name="Haakensen B."/>
            <person name="Lamar E."/>
            <person name="Latreille P."/>
            <person name="Leonard S."/>
            <person name="Meyer R."/>
            <person name="Mulvaney E."/>
            <person name="Ozersky P."/>
            <person name="Riley A."/>
            <person name="Strowmatt C."/>
            <person name="Wagner-McPherson C."/>
            <person name="Wollam A."/>
            <person name="Yoakum M."/>
            <person name="Bell M."/>
            <person name="Dedhia N."/>
            <person name="Parnell L."/>
            <person name="Shah R."/>
            <person name="Rodriguez M."/>
            <person name="Hoon See L."/>
            <person name="Vil D."/>
            <person name="Baker J."/>
            <person name="Kirchoff K."/>
            <person name="Toth K."/>
            <person name="King L."/>
            <person name="Bahret A."/>
            <person name="Miller B."/>
            <person name="Marra M.A."/>
            <person name="Martienssen R."/>
            <person name="McCombie W.R."/>
            <person name="Wilson R.K."/>
            <person name="Murphy G."/>
            <person name="Bancroft I."/>
            <person name="Volckaert G."/>
            <person name="Wambutt R."/>
            <person name="Duesterhoeft A."/>
            <person name="Stiekema W."/>
            <person name="Pohl T."/>
            <person name="Entian K.-D."/>
            <person name="Terryn N."/>
            <person name="Hartley N."/>
            <person name="Bent E."/>
            <person name="Johnson S."/>
            <person name="Langham S.-A."/>
            <person name="McCullagh B."/>
            <person name="Robben J."/>
            <person name="Grymonprez B."/>
            <person name="Zimmermann W."/>
            <person name="Ramsperger U."/>
            <person name="Wedler H."/>
            <person name="Balke K."/>
            <person name="Wedler E."/>
            <person name="Peters S."/>
            <person name="van Staveren M."/>
            <person name="Dirkse W."/>
            <person name="Mooijman P."/>
            <person name="Klein Lankhorst R."/>
            <person name="Weitzenegger T."/>
            <person name="Bothe G."/>
            <person name="Rose M."/>
            <person name="Hauf J."/>
            <person name="Berneiser S."/>
            <person name="Hempel S."/>
            <person name="Feldpausch M."/>
            <person name="Lamberth S."/>
            <person name="Villarroel R."/>
            <person name="Gielen J."/>
            <person name="Ardiles W."/>
            <person name="Bents O."/>
            <person name="Lemcke K."/>
            <person name="Kolesov G."/>
            <person name="Mayer K.F.X."/>
            <person name="Rudd S."/>
            <person name="Schoof H."/>
            <person name="Schueller C."/>
            <person name="Zaccaria P."/>
            <person name="Mewes H.-W."/>
            <person name="Bevan M."/>
            <person name="Fransz P.F."/>
        </authorList>
    </citation>
    <scope>NUCLEOTIDE SEQUENCE [LARGE SCALE GENOMIC DNA]</scope>
    <source>
        <strain>cv. Columbia</strain>
    </source>
</reference>
<reference key="3">
    <citation type="journal article" date="2017" name="Plant J.">
        <title>Araport11: a complete reannotation of the Arabidopsis thaliana reference genome.</title>
        <authorList>
            <person name="Cheng C.Y."/>
            <person name="Krishnakumar V."/>
            <person name="Chan A.P."/>
            <person name="Thibaud-Nissen F."/>
            <person name="Schobel S."/>
            <person name="Town C.D."/>
        </authorList>
    </citation>
    <scope>GENOME REANNOTATION</scope>
    <source>
        <strain>cv. Columbia</strain>
    </source>
</reference>
<reference key="4">
    <citation type="journal article" date="2005" name="Nucleic Acids Res.">
        <title>The genes encoding Arabidopsis ORC subunits are E2F targets and the two ORC1 genes are differently expressed in proliferating and endoreplicating cells.</title>
        <authorList>
            <person name="Diaz-Trivino S."/>
            <person name="Castellano M.M."/>
            <person name="Sanchez M.P."/>
            <person name="Ramirez-Parra E."/>
            <person name="Desvoyes B."/>
            <person name="Gutierrez C."/>
        </authorList>
    </citation>
    <scope>SUBUNIT</scope>
    <scope>INTERACTION WITH ORC1A; ORC2; ORC4; ORC5 AND ORC6</scope>
    <scope>TISSUE SPECIFICITY</scope>
    <scope>INDUCTION BY E2F AND SUCROSE</scope>
    <scope>GENE FAMILY</scope>
    <scope>NOMENCLATURE</scope>
</reference>
<reference key="5">
    <citation type="journal article" date="2005" name="Plant Physiol.">
        <title>Genome-wide identification of potential plant E2F target genes.</title>
        <authorList>
            <person name="Vandepoele K."/>
            <person name="Vlieghe K."/>
            <person name="Florquin K."/>
            <person name="Hennig L."/>
            <person name="Beemster G.T.S."/>
            <person name="Gruissem W."/>
            <person name="Van de Peer Y."/>
            <person name="Inze D."/>
            <person name="De Veylder L."/>
        </authorList>
    </citation>
    <scope>INDUCTION BY E2F</scope>
</reference>
<reference key="6">
    <citation type="journal article" date="2007" name="Plant Physiol.">
        <title>Genome-wide analysis of the core DNA replication machinery in the higher plants Arabidopsis and rice.</title>
        <authorList>
            <person name="Shultz R.W."/>
            <person name="Tatineni V.M."/>
            <person name="Hanley-Bowdoin L."/>
            <person name="Thompson W.F."/>
        </authorList>
    </citation>
    <scope>REVIEW ON THE CORE DNA REPLICATION MACHINERY</scope>
</reference>
<accession>Q6E7H0</accession>
<accession>Q9LFE8</accession>
<sequence>MAPSGTVADPPQCSTTDSFNSSDTAENDIRPFFVLHKASSGNHNGKLTGIVKSKRRIESPSPKIAKRSEVESVEEEDGQFFSTLRFKVFETVWSKIEKTIEDVLRNSNSKVFSGIHDWIRESFESIISSGALKLSEAVRSYPVLTQASSKQLLTAMVLTRNLEMVDDLLTFEELELHLKSQGCHVAKLSSMDFSAKSGVGGCLRGLLRQFVMPTVDVADVTILASWYRENKNHENPVVIIVDDTERCCGPVLSDLILILSEWAIKVPIFLIMGVSTAHDAPRKILSVNALQRLCATRFTLSSPAERMDAVLKAVFLKPCSGFTVSHKVALFMRSYFLCQDGTLTSFVRTLKIACLQHFSLEPLSIMLEHFCHDGVNQLSGEGTELLTEATMKHAFDLPSVTRNKITRSTFEMLPHFLLDLQRMPNPWSIVVLCLYEAGKFDKLRLLDIFCEILDPEARYLKYFSPSEIVNSQSHNSGRNNVIRRVLRKLRDLSPSQLSSMLKSWENLTAEFTEINDKVIELHPFMRAVEAAGQRQGLPNSPKKHASRSNSKLEKELKAMTDKVATVIEFMLREYMKPVESVPFHEILCFKNVDKLQSALLGDPRGRIQLDLLESHDILHCVCCSQRGTTLLPSMHDTSILYKLAQEHADVINLHDWYQSFKTILIPRSSKAKQKSKSSSKSKKRKEICEEPEAPAEALIQARFCRAVMELQITGLIRMPSKRRPDFVQRVAFGS</sequence>